<keyword id="KW-0050">Antiport</keyword>
<keyword id="KW-0997">Cell inner membrane</keyword>
<keyword id="KW-1003">Cell membrane</keyword>
<keyword id="KW-0406">Ion transport</keyword>
<keyword id="KW-0472">Membrane</keyword>
<keyword id="KW-0915">Sodium</keyword>
<keyword id="KW-0739">Sodium transport</keyword>
<keyword id="KW-0812">Transmembrane</keyword>
<keyword id="KW-1133">Transmembrane helix</keyword>
<keyword id="KW-0813">Transport</keyword>
<dbReference type="EMBL" id="CP000926">
    <property type="protein sequence ID" value="ABZ00172.1"/>
    <property type="molecule type" value="Genomic_DNA"/>
</dbReference>
<dbReference type="RefSeq" id="WP_012273843.1">
    <property type="nucleotide sequence ID" value="NC_010322.1"/>
</dbReference>
<dbReference type="SMR" id="B0KUA6"/>
<dbReference type="KEGG" id="ppg:PputGB1_4283"/>
<dbReference type="eggNOG" id="COG3004">
    <property type="taxonomic scope" value="Bacteria"/>
</dbReference>
<dbReference type="HOGENOM" id="CLU_015803_1_0_6"/>
<dbReference type="Proteomes" id="UP000002157">
    <property type="component" value="Chromosome"/>
</dbReference>
<dbReference type="GO" id="GO:0005886">
    <property type="term" value="C:plasma membrane"/>
    <property type="evidence" value="ECO:0007669"/>
    <property type="project" value="UniProtKB-SubCell"/>
</dbReference>
<dbReference type="GO" id="GO:0015385">
    <property type="term" value="F:sodium:proton antiporter activity"/>
    <property type="evidence" value="ECO:0007669"/>
    <property type="project" value="TreeGrafter"/>
</dbReference>
<dbReference type="GO" id="GO:0006885">
    <property type="term" value="P:regulation of pH"/>
    <property type="evidence" value="ECO:0007669"/>
    <property type="project" value="InterPro"/>
</dbReference>
<dbReference type="Gene3D" id="1.20.1530.10">
    <property type="entry name" value="Na+/H+ antiporter like domain"/>
    <property type="match status" value="1"/>
</dbReference>
<dbReference type="HAMAP" id="MF_01844">
    <property type="entry name" value="NhaA"/>
    <property type="match status" value="1"/>
</dbReference>
<dbReference type="InterPro" id="IPR023171">
    <property type="entry name" value="Na/H_antiporter_dom_sf"/>
</dbReference>
<dbReference type="InterPro" id="IPR004670">
    <property type="entry name" value="NhaA"/>
</dbReference>
<dbReference type="NCBIfam" id="TIGR00773">
    <property type="entry name" value="NhaA"/>
    <property type="match status" value="1"/>
</dbReference>
<dbReference type="NCBIfam" id="NF007111">
    <property type="entry name" value="PRK09560.1"/>
    <property type="match status" value="1"/>
</dbReference>
<dbReference type="NCBIfam" id="NF007112">
    <property type="entry name" value="PRK09561.1"/>
    <property type="match status" value="1"/>
</dbReference>
<dbReference type="PANTHER" id="PTHR30341:SF0">
    <property type="entry name" value="NA(+)_H(+) ANTIPORTER NHAA"/>
    <property type="match status" value="1"/>
</dbReference>
<dbReference type="PANTHER" id="PTHR30341">
    <property type="entry name" value="SODIUM ION/PROTON ANTIPORTER NHAA-RELATED"/>
    <property type="match status" value="1"/>
</dbReference>
<dbReference type="Pfam" id="PF06965">
    <property type="entry name" value="Na_H_antiport_1"/>
    <property type="match status" value="1"/>
</dbReference>
<name>NHAA_PSEPG</name>
<organism>
    <name type="scientific">Pseudomonas putida (strain GB-1)</name>
    <dbReference type="NCBI Taxonomy" id="76869"/>
    <lineage>
        <taxon>Bacteria</taxon>
        <taxon>Pseudomonadati</taxon>
        <taxon>Pseudomonadota</taxon>
        <taxon>Gammaproteobacteria</taxon>
        <taxon>Pseudomonadales</taxon>
        <taxon>Pseudomonadaceae</taxon>
        <taxon>Pseudomonas</taxon>
    </lineage>
</organism>
<comment type="function">
    <text evidence="1">Na(+)/H(+) antiporter that extrudes sodium in exchange for external protons.</text>
</comment>
<comment type="catalytic activity">
    <reaction evidence="1">
        <text>Na(+)(in) + 2 H(+)(out) = Na(+)(out) + 2 H(+)(in)</text>
        <dbReference type="Rhea" id="RHEA:29251"/>
        <dbReference type="ChEBI" id="CHEBI:15378"/>
        <dbReference type="ChEBI" id="CHEBI:29101"/>
    </reaction>
    <physiologicalReaction direction="left-to-right" evidence="1">
        <dbReference type="Rhea" id="RHEA:29252"/>
    </physiologicalReaction>
</comment>
<comment type="subcellular location">
    <subcellularLocation>
        <location evidence="1">Cell inner membrane</location>
        <topology evidence="1">Multi-pass membrane protein</topology>
    </subcellularLocation>
</comment>
<comment type="similarity">
    <text evidence="1">Belongs to the NhaA Na(+)/H(+) (TC 2.A.33) antiporter family.</text>
</comment>
<accession>B0KUA6</accession>
<protein>
    <recommendedName>
        <fullName evidence="1">Na(+)/H(+) antiporter NhaA</fullName>
    </recommendedName>
    <alternativeName>
        <fullName evidence="1">Sodium/proton antiporter NhaA</fullName>
    </alternativeName>
</protein>
<proteinExistence type="inferred from homology"/>
<sequence length="391" mass="40812">MRSLFTRFFQLEAASGLLLIAAAVLALIINNSPLSYLYSGLLDVPVAVQIGALNIAKPLLLWINDGLMALFFLLIGLEVKREVVDGHLSKPSQVILPATAAVGGMVVPALIYWFINRDNPAAVAGWAIPTATDIAFALGVLALLGKRVPVSLKLFLMTLAIIDDLGAIIVIALFYSGTLSSVSLLLAAACLVVLIAMNRLGVVKLGPYMVIGLILWVCVLKSGVHATLAGVALALCIPLRTRNAETSPLLALEHALHPWVAYAILPLFAFANAGVSLAGMTVESFTHPVPMGIAVGLLLGKTVGVFGLTWLAVKLRLAALPAGAGWGQILGVAILCGIGFTMSLFVGSLAFSPGSSEYAGMDRMGILTGSFFAAVIGYAVTAMASRKPRVG</sequence>
<reference key="1">
    <citation type="submission" date="2008-01" db="EMBL/GenBank/DDBJ databases">
        <title>Complete sequence of Pseudomonas putida GB-1.</title>
        <authorList>
            <consortium name="US DOE Joint Genome Institute"/>
            <person name="Copeland A."/>
            <person name="Lucas S."/>
            <person name="Lapidus A."/>
            <person name="Barry K."/>
            <person name="Glavina del Rio T."/>
            <person name="Dalin E."/>
            <person name="Tice H."/>
            <person name="Pitluck S."/>
            <person name="Bruce D."/>
            <person name="Goodwin L."/>
            <person name="Chertkov O."/>
            <person name="Brettin T."/>
            <person name="Detter J.C."/>
            <person name="Han C."/>
            <person name="Kuske C.R."/>
            <person name="Schmutz J."/>
            <person name="Larimer F."/>
            <person name="Land M."/>
            <person name="Hauser L."/>
            <person name="Kyrpides N."/>
            <person name="Kim E."/>
            <person name="McCarthy J.K."/>
            <person name="Richardson P."/>
        </authorList>
    </citation>
    <scope>NUCLEOTIDE SEQUENCE [LARGE SCALE GENOMIC DNA]</scope>
    <source>
        <strain>GB-1</strain>
    </source>
</reference>
<feature type="chain" id="PRO_0000334372" description="Na(+)/H(+) antiporter NhaA">
    <location>
        <begin position="1"/>
        <end position="391"/>
    </location>
</feature>
<feature type="transmembrane region" description="Helical" evidence="1">
    <location>
        <begin position="9"/>
        <end position="29"/>
    </location>
</feature>
<feature type="transmembrane region" description="Helical" evidence="1">
    <location>
        <begin position="36"/>
        <end position="56"/>
    </location>
</feature>
<feature type="transmembrane region" description="Helical" evidence="1">
    <location>
        <begin position="59"/>
        <end position="79"/>
    </location>
</feature>
<feature type="transmembrane region" description="Helical" evidence="1">
    <location>
        <begin position="95"/>
        <end position="115"/>
    </location>
</feature>
<feature type="transmembrane region" description="Helical" evidence="1">
    <location>
        <begin position="123"/>
        <end position="143"/>
    </location>
</feature>
<feature type="transmembrane region" description="Helical" evidence="1">
    <location>
        <begin position="154"/>
        <end position="174"/>
    </location>
</feature>
<feature type="transmembrane region" description="Helical" evidence="1">
    <location>
        <begin position="177"/>
        <end position="197"/>
    </location>
</feature>
<feature type="transmembrane region" description="Helical" evidence="1">
    <location>
        <begin position="213"/>
        <end position="235"/>
    </location>
</feature>
<feature type="transmembrane region" description="Helical" evidence="1">
    <location>
        <begin position="259"/>
        <end position="279"/>
    </location>
</feature>
<feature type="transmembrane region" description="Helical" evidence="1">
    <location>
        <begin position="293"/>
        <end position="313"/>
    </location>
</feature>
<feature type="transmembrane region" description="Helical" evidence="1">
    <location>
        <begin position="329"/>
        <end position="349"/>
    </location>
</feature>
<feature type="transmembrane region" description="Helical" evidence="1">
    <location>
        <begin position="364"/>
        <end position="384"/>
    </location>
</feature>
<gene>
    <name evidence="1" type="primary">nhaA</name>
    <name type="ordered locus">PputGB1_4283</name>
</gene>
<evidence type="ECO:0000255" key="1">
    <source>
        <dbReference type="HAMAP-Rule" id="MF_01844"/>
    </source>
</evidence>